<sequence length="382" mass="42691">MAARNWIGLFSRGEGNNLTNALERGYEAALLIQSLELEFYADRKVRPELELSVPRSVQATVLRRFHAALQICRSSLSTVTPNRGQLDPQELRQLQLIETVVSRYSGKRSSSKSGMSTAPELLPRSLLGVFDSVRRQLDPSSEESVVAGFRRRRDSTLASLRILLLLVLVPLLVQQVSNTYIVGPAVERLSPDLSFLSYPKPQLEEVAVEKLRIYKEELEFDALLKGQEPLSSDLLVIKLRERAQELKQEADQESVQAIKNVLADLAGLMAFVVVCLVSRDQLRVLRGFLDEAIYGLSDSAKAFAIILFTDIFVGYHSPEGWTVLLDGIAHHFGLPTQENFILLFIATFPVILATIFKYWIFRYLNRVSPSSVATLKGMNGGG</sequence>
<accession>Q7U6W9</accession>
<feature type="chain" id="PRO_0000293505" description="Proton extrusion protein PxcA">
    <location>
        <begin position="1"/>
        <end position="382"/>
    </location>
</feature>
<feature type="transmembrane region" description="Helical" evidence="1">
    <location>
        <begin position="162"/>
        <end position="182"/>
    </location>
</feature>
<feature type="transmembrane region" description="Helical" evidence="1">
    <location>
        <begin position="257"/>
        <end position="277"/>
    </location>
</feature>
<feature type="transmembrane region" description="Helical" evidence="1">
    <location>
        <begin position="305"/>
        <end position="325"/>
    </location>
</feature>
<feature type="transmembrane region" description="Helical" evidence="1">
    <location>
        <begin position="340"/>
        <end position="360"/>
    </location>
</feature>
<dbReference type="EMBL" id="BX569692">
    <property type="protein sequence ID" value="CAE07732.1"/>
    <property type="molecule type" value="Genomic_DNA"/>
</dbReference>
<dbReference type="RefSeq" id="WP_011128082.1">
    <property type="nucleotide sequence ID" value="NC_005070.1"/>
</dbReference>
<dbReference type="SMR" id="Q7U6W9"/>
<dbReference type="STRING" id="84588.SYNW1217"/>
<dbReference type="KEGG" id="syw:SYNW1217"/>
<dbReference type="eggNOG" id="ENOG502Z8DN">
    <property type="taxonomic scope" value="Bacteria"/>
</dbReference>
<dbReference type="HOGENOM" id="CLU_690401_0_0_3"/>
<dbReference type="Proteomes" id="UP000001422">
    <property type="component" value="Chromosome"/>
</dbReference>
<dbReference type="GO" id="GO:0005886">
    <property type="term" value="C:plasma membrane"/>
    <property type="evidence" value="ECO:0007669"/>
    <property type="project" value="UniProtKB-SubCell"/>
</dbReference>
<dbReference type="GO" id="GO:0015078">
    <property type="term" value="F:proton transmembrane transporter activity"/>
    <property type="evidence" value="ECO:0007669"/>
    <property type="project" value="UniProtKB-UniRule"/>
</dbReference>
<dbReference type="HAMAP" id="MF_01308">
    <property type="entry name" value="CemA_PxcA"/>
    <property type="match status" value="1"/>
</dbReference>
<dbReference type="InterPro" id="IPR004282">
    <property type="entry name" value="CemA"/>
</dbReference>
<dbReference type="NCBIfam" id="NF002705">
    <property type="entry name" value="PRK02507.1-4"/>
    <property type="match status" value="1"/>
</dbReference>
<dbReference type="PANTHER" id="PTHR33650:SF2">
    <property type="entry name" value="CHLOROPLAST ENVELOPE MEMBRANE PROTEIN"/>
    <property type="match status" value="1"/>
</dbReference>
<dbReference type="PANTHER" id="PTHR33650">
    <property type="entry name" value="CHLOROPLAST ENVELOPE MEMBRANE PROTEIN-RELATED"/>
    <property type="match status" value="1"/>
</dbReference>
<dbReference type="Pfam" id="PF03040">
    <property type="entry name" value="CemA"/>
    <property type="match status" value="1"/>
</dbReference>
<evidence type="ECO:0000255" key="1">
    <source>
        <dbReference type="HAMAP-Rule" id="MF_01308"/>
    </source>
</evidence>
<protein>
    <recommendedName>
        <fullName evidence="1">Proton extrusion protein PxcA</fullName>
    </recommendedName>
</protein>
<reference key="1">
    <citation type="journal article" date="2003" name="Nature">
        <title>The genome of a motile marine Synechococcus.</title>
        <authorList>
            <person name="Palenik B."/>
            <person name="Brahamsha B."/>
            <person name="Larimer F.W."/>
            <person name="Land M.L."/>
            <person name="Hauser L."/>
            <person name="Chain P."/>
            <person name="Lamerdin J.E."/>
            <person name="Regala W."/>
            <person name="Allen E.E."/>
            <person name="McCarren J."/>
            <person name="Paulsen I.T."/>
            <person name="Dufresne A."/>
            <person name="Partensky F."/>
            <person name="Webb E.A."/>
            <person name="Waterbury J."/>
        </authorList>
    </citation>
    <scope>NUCLEOTIDE SEQUENCE [LARGE SCALE GENOMIC DNA]</scope>
    <source>
        <strain>WH8102</strain>
    </source>
</reference>
<comment type="function">
    <text evidence="1">Required for H(+) efflux immediately after light irradiation to form a rapid H(+) concentration gradient across the thylakoid membranes. Together with PxcL, contributes to transient H(+) uptake following dark to light transition.</text>
</comment>
<comment type="subcellular location">
    <subcellularLocation>
        <location evidence="1">Cell inner membrane</location>
        <topology evidence="1">Multi-pass membrane protein</topology>
    </subcellularLocation>
</comment>
<comment type="similarity">
    <text evidence="1">Belongs to the CemA family.</text>
</comment>
<organism>
    <name type="scientific">Parasynechococcus marenigrum (strain WH8102)</name>
    <dbReference type="NCBI Taxonomy" id="84588"/>
    <lineage>
        <taxon>Bacteria</taxon>
        <taxon>Bacillati</taxon>
        <taxon>Cyanobacteriota</taxon>
        <taxon>Cyanophyceae</taxon>
        <taxon>Synechococcales</taxon>
        <taxon>Prochlorococcaceae</taxon>
        <taxon>Parasynechococcus</taxon>
        <taxon>Parasynechococcus marenigrum</taxon>
    </lineage>
</organism>
<keyword id="KW-0997">Cell inner membrane</keyword>
<keyword id="KW-1003">Cell membrane</keyword>
<keyword id="KW-0375">Hydrogen ion transport</keyword>
<keyword id="KW-0406">Ion transport</keyword>
<keyword id="KW-0472">Membrane</keyword>
<keyword id="KW-0812">Transmembrane</keyword>
<keyword id="KW-1133">Transmembrane helix</keyword>
<keyword id="KW-0813">Transport</keyword>
<gene>
    <name evidence="1" type="primary">pxcA</name>
    <name type="ordered locus">SYNW1217</name>
</gene>
<proteinExistence type="inferred from homology"/>
<name>PXCA_PARMW</name>